<keyword id="KW-0004">4Fe-4S</keyword>
<keyword id="KW-0408">Iron</keyword>
<keyword id="KW-0411">Iron-sulfur</keyword>
<keyword id="KW-0456">Lyase</keyword>
<keyword id="KW-0479">Metal-binding</keyword>
<keyword id="KW-1185">Reference proteome</keyword>
<keyword id="KW-0949">S-adenosyl-L-methionine</keyword>
<keyword id="KW-0784">Thiamine biosynthesis</keyword>
<keyword id="KW-0862">Zinc</keyword>
<reference key="1">
    <citation type="journal article" date="2011" name="MBio">
        <title>Novel metabolic attributes of the genus Cyanothece, comprising a group of unicellular nitrogen-fixing Cyanobacteria.</title>
        <authorList>
            <person name="Bandyopadhyay A."/>
            <person name="Elvitigala T."/>
            <person name="Welsh E."/>
            <person name="Stockel J."/>
            <person name="Liberton M."/>
            <person name="Min H."/>
            <person name="Sherman L.A."/>
            <person name="Pakrasi H.B."/>
        </authorList>
    </citation>
    <scope>NUCLEOTIDE SEQUENCE [LARGE SCALE GENOMIC DNA]</scope>
    <source>
        <strain>PCC 7424</strain>
    </source>
</reference>
<comment type="function">
    <text evidence="1">Catalyzes the synthesis of the hydroxymethylpyrimidine phosphate (HMP-P) moiety of thiamine from aminoimidazole ribotide (AIR) in a radical S-adenosyl-L-methionine (SAM)-dependent reaction.</text>
</comment>
<comment type="catalytic activity">
    <reaction evidence="1">
        <text>5-amino-1-(5-phospho-beta-D-ribosyl)imidazole + S-adenosyl-L-methionine = 4-amino-2-methyl-5-(phosphooxymethyl)pyrimidine + CO + 5'-deoxyadenosine + formate + L-methionine + 3 H(+)</text>
        <dbReference type="Rhea" id="RHEA:24840"/>
        <dbReference type="ChEBI" id="CHEBI:15378"/>
        <dbReference type="ChEBI" id="CHEBI:15740"/>
        <dbReference type="ChEBI" id="CHEBI:17245"/>
        <dbReference type="ChEBI" id="CHEBI:17319"/>
        <dbReference type="ChEBI" id="CHEBI:57844"/>
        <dbReference type="ChEBI" id="CHEBI:58354"/>
        <dbReference type="ChEBI" id="CHEBI:59789"/>
        <dbReference type="ChEBI" id="CHEBI:137981"/>
        <dbReference type="EC" id="4.1.99.17"/>
    </reaction>
</comment>
<comment type="cofactor">
    <cofactor evidence="1">
        <name>[4Fe-4S] cluster</name>
        <dbReference type="ChEBI" id="CHEBI:49883"/>
    </cofactor>
    <text evidence="1">Binds 1 [4Fe-4S] cluster per subunit. The cluster is coordinated with 3 cysteines and an exchangeable S-adenosyl-L-methionine.</text>
</comment>
<comment type="pathway">
    <text evidence="1">Cofactor biosynthesis; thiamine diphosphate biosynthesis.</text>
</comment>
<comment type="similarity">
    <text evidence="1">Belongs to the ThiC family.</text>
</comment>
<feature type="chain" id="PRO_1000198051" description="Phosphomethylpyrimidine synthase">
    <location>
        <begin position="1"/>
        <end position="459"/>
    </location>
</feature>
<feature type="binding site" evidence="1">
    <location>
        <position position="80"/>
    </location>
    <ligand>
        <name>substrate</name>
    </ligand>
</feature>
<feature type="binding site" evidence="1">
    <location>
        <position position="109"/>
    </location>
    <ligand>
        <name>substrate</name>
    </ligand>
</feature>
<feature type="binding site" evidence="1">
    <location>
        <position position="139"/>
    </location>
    <ligand>
        <name>substrate</name>
    </ligand>
</feature>
<feature type="binding site" evidence="1">
    <location>
        <position position="175"/>
    </location>
    <ligand>
        <name>substrate</name>
    </ligand>
</feature>
<feature type="binding site" evidence="1">
    <location>
        <begin position="195"/>
        <end position="197"/>
    </location>
    <ligand>
        <name>substrate</name>
    </ligand>
</feature>
<feature type="binding site" evidence="1">
    <location>
        <begin position="236"/>
        <end position="239"/>
    </location>
    <ligand>
        <name>substrate</name>
    </ligand>
</feature>
<feature type="binding site" evidence="1">
    <location>
        <position position="275"/>
    </location>
    <ligand>
        <name>substrate</name>
    </ligand>
</feature>
<feature type="binding site" evidence="1">
    <location>
        <position position="279"/>
    </location>
    <ligand>
        <name>Zn(2+)</name>
        <dbReference type="ChEBI" id="CHEBI:29105"/>
    </ligand>
</feature>
<feature type="binding site" evidence="1">
    <location>
        <position position="302"/>
    </location>
    <ligand>
        <name>substrate</name>
    </ligand>
</feature>
<feature type="binding site" evidence="1">
    <location>
        <position position="343"/>
    </location>
    <ligand>
        <name>Zn(2+)</name>
        <dbReference type="ChEBI" id="CHEBI:29105"/>
    </ligand>
</feature>
<feature type="binding site" evidence="1">
    <location>
        <position position="423"/>
    </location>
    <ligand>
        <name>[4Fe-4S] cluster</name>
        <dbReference type="ChEBI" id="CHEBI:49883"/>
        <note>4Fe-4S-S-AdoMet</note>
    </ligand>
</feature>
<feature type="binding site" evidence="1">
    <location>
        <position position="426"/>
    </location>
    <ligand>
        <name>[4Fe-4S] cluster</name>
        <dbReference type="ChEBI" id="CHEBI:49883"/>
        <note>4Fe-4S-S-AdoMet</note>
    </ligand>
</feature>
<feature type="binding site" evidence="1">
    <location>
        <position position="431"/>
    </location>
    <ligand>
        <name>[4Fe-4S] cluster</name>
        <dbReference type="ChEBI" id="CHEBI:49883"/>
        <note>4Fe-4S-S-AdoMet</note>
    </ligand>
</feature>
<dbReference type="EC" id="4.1.99.17" evidence="1"/>
<dbReference type="EMBL" id="CP001291">
    <property type="protein sequence ID" value="ACK70340.1"/>
    <property type="molecule type" value="Genomic_DNA"/>
</dbReference>
<dbReference type="RefSeq" id="WP_012599283.1">
    <property type="nucleotide sequence ID" value="NC_011729.1"/>
</dbReference>
<dbReference type="SMR" id="B7KDN8"/>
<dbReference type="STRING" id="65393.PCC7424_1908"/>
<dbReference type="KEGG" id="cyc:PCC7424_1908"/>
<dbReference type="eggNOG" id="COG0422">
    <property type="taxonomic scope" value="Bacteria"/>
</dbReference>
<dbReference type="HOGENOM" id="CLU_013181_2_2_3"/>
<dbReference type="OrthoDB" id="9805897at2"/>
<dbReference type="UniPathway" id="UPA00060"/>
<dbReference type="Proteomes" id="UP000002384">
    <property type="component" value="Chromosome"/>
</dbReference>
<dbReference type="GO" id="GO:0005829">
    <property type="term" value="C:cytosol"/>
    <property type="evidence" value="ECO:0007669"/>
    <property type="project" value="TreeGrafter"/>
</dbReference>
<dbReference type="GO" id="GO:0051539">
    <property type="term" value="F:4 iron, 4 sulfur cluster binding"/>
    <property type="evidence" value="ECO:0007669"/>
    <property type="project" value="UniProtKB-KW"/>
</dbReference>
<dbReference type="GO" id="GO:0016830">
    <property type="term" value="F:carbon-carbon lyase activity"/>
    <property type="evidence" value="ECO:0007669"/>
    <property type="project" value="InterPro"/>
</dbReference>
<dbReference type="GO" id="GO:0008270">
    <property type="term" value="F:zinc ion binding"/>
    <property type="evidence" value="ECO:0007669"/>
    <property type="project" value="UniProtKB-UniRule"/>
</dbReference>
<dbReference type="GO" id="GO:0009228">
    <property type="term" value="P:thiamine biosynthetic process"/>
    <property type="evidence" value="ECO:0007669"/>
    <property type="project" value="UniProtKB-KW"/>
</dbReference>
<dbReference type="GO" id="GO:0009229">
    <property type="term" value="P:thiamine diphosphate biosynthetic process"/>
    <property type="evidence" value="ECO:0007669"/>
    <property type="project" value="UniProtKB-UniRule"/>
</dbReference>
<dbReference type="FunFam" id="3.20.20.540:FF:000001">
    <property type="entry name" value="Phosphomethylpyrimidine synthase"/>
    <property type="match status" value="1"/>
</dbReference>
<dbReference type="Gene3D" id="6.10.250.620">
    <property type="match status" value="1"/>
</dbReference>
<dbReference type="Gene3D" id="3.20.20.540">
    <property type="entry name" value="Radical SAM ThiC family, central domain"/>
    <property type="match status" value="1"/>
</dbReference>
<dbReference type="HAMAP" id="MF_00089">
    <property type="entry name" value="ThiC"/>
    <property type="match status" value="1"/>
</dbReference>
<dbReference type="InterPro" id="IPR037509">
    <property type="entry name" value="ThiC"/>
</dbReference>
<dbReference type="InterPro" id="IPR038521">
    <property type="entry name" value="ThiC/Bza_core_dom"/>
</dbReference>
<dbReference type="InterPro" id="IPR002817">
    <property type="entry name" value="ThiC/BzaA/B"/>
</dbReference>
<dbReference type="NCBIfam" id="NF006763">
    <property type="entry name" value="PRK09284.1"/>
    <property type="match status" value="1"/>
</dbReference>
<dbReference type="NCBIfam" id="NF009895">
    <property type="entry name" value="PRK13352.1"/>
    <property type="match status" value="1"/>
</dbReference>
<dbReference type="NCBIfam" id="TIGR00190">
    <property type="entry name" value="thiC"/>
    <property type="match status" value="1"/>
</dbReference>
<dbReference type="PANTHER" id="PTHR30557:SF1">
    <property type="entry name" value="PHOSPHOMETHYLPYRIMIDINE SYNTHASE, CHLOROPLASTIC"/>
    <property type="match status" value="1"/>
</dbReference>
<dbReference type="PANTHER" id="PTHR30557">
    <property type="entry name" value="THIAMINE BIOSYNTHESIS PROTEIN THIC"/>
    <property type="match status" value="1"/>
</dbReference>
<dbReference type="Pfam" id="PF01964">
    <property type="entry name" value="ThiC_Rad_SAM"/>
    <property type="match status" value="1"/>
</dbReference>
<dbReference type="SFLD" id="SFLDF00407">
    <property type="entry name" value="phosphomethylpyrimidine_syntha"/>
    <property type="match status" value="1"/>
</dbReference>
<dbReference type="SFLD" id="SFLDG01114">
    <property type="entry name" value="phosphomethylpyrimidine_syntha"/>
    <property type="match status" value="1"/>
</dbReference>
<dbReference type="SFLD" id="SFLDS00113">
    <property type="entry name" value="Radical_SAM_Phosphomethylpyrim"/>
    <property type="match status" value="1"/>
</dbReference>
<sequence>MRAEWIAKRRGQSNVSQMHYARQGVITEEMHYVANRENLPVDLIRDEVARGRMIIPANINHVNLEPMCIGIASQCKVNANIGASPNSSDINEELEKLRLAVKYGADTVMDLSTGGGDLDTIRTAIINDSPVPIGTVPIYQALESVHGRIENLTPDDFLHIIEKHAQQGVDYMTIHAGILMEYLPLVRNRLTGIVSRGGGIIAKWMLHHHKQNPLYTHFDDIIEIFKKYDVSFSLGDSLRPGCLHDASDEAQLSELKTLGQLTRRAWEHDVQVMVEGPGHVPMDQIEFNVKKQMEECSEAPFYVLGPLVTDIAPGYDHITSAIGAAMAGWYGTAMLCYVTPKEHLGLPNAEDVRNGLIAYKIAAHAADVARHRQGARDRDDQLSNARYNFDWNRQFELSLDPDRAKEYHDETLPADIYKTAEFCSMCGPKFCPMQTKVDADALTELEKFLAKDKETVSQS</sequence>
<name>THIC_GLOC7</name>
<gene>
    <name evidence="1" type="primary">thiC</name>
    <name type="ordered locus">PCC7424_1908</name>
</gene>
<proteinExistence type="inferred from homology"/>
<organism>
    <name type="scientific">Gloeothece citriformis (strain PCC 7424)</name>
    <name type="common">Cyanothece sp. (strain PCC 7424)</name>
    <dbReference type="NCBI Taxonomy" id="65393"/>
    <lineage>
        <taxon>Bacteria</taxon>
        <taxon>Bacillati</taxon>
        <taxon>Cyanobacteriota</taxon>
        <taxon>Cyanophyceae</taxon>
        <taxon>Oscillatoriophycideae</taxon>
        <taxon>Chroococcales</taxon>
        <taxon>Aphanothecaceae</taxon>
        <taxon>Gloeothece</taxon>
        <taxon>Gloeothece citriformis</taxon>
    </lineage>
</organism>
<accession>B7KDN8</accession>
<evidence type="ECO:0000255" key="1">
    <source>
        <dbReference type="HAMAP-Rule" id="MF_00089"/>
    </source>
</evidence>
<protein>
    <recommendedName>
        <fullName evidence="1">Phosphomethylpyrimidine synthase</fullName>
        <ecNumber evidence="1">4.1.99.17</ecNumber>
    </recommendedName>
    <alternativeName>
        <fullName evidence="1">Hydroxymethylpyrimidine phosphate synthase</fullName>
        <shortName evidence="1">HMP-P synthase</shortName>
        <shortName evidence="1">HMP-phosphate synthase</shortName>
        <shortName evidence="1">HMPP synthase</shortName>
    </alternativeName>
    <alternativeName>
        <fullName evidence="1">Thiamine biosynthesis protein ThiC</fullName>
    </alternativeName>
</protein>